<accession>Q9K717</accession>
<organism>
    <name type="scientific">Halalkalibacterium halodurans (strain ATCC BAA-125 / DSM 18197 / FERM 7344 / JCM 9153 / C-125)</name>
    <name type="common">Bacillus halodurans</name>
    <dbReference type="NCBI Taxonomy" id="272558"/>
    <lineage>
        <taxon>Bacteria</taxon>
        <taxon>Bacillati</taxon>
        <taxon>Bacillota</taxon>
        <taxon>Bacilli</taxon>
        <taxon>Bacillales</taxon>
        <taxon>Bacillaceae</taxon>
        <taxon>Halalkalibacterium (ex Joshi et al. 2022)</taxon>
    </lineage>
</organism>
<name>ENO_HALH5</name>
<gene>
    <name evidence="1" type="primary">eno</name>
    <name type="ordered locus">BH3556</name>
</gene>
<sequence length="429" mass="46347">MTIITDVYAREVLDSRGNPTVEVEVYLESGAMGRALVPSGASTGEYEAVELRDGGERFLGKGVLKAVENVNEVIAPELIGFDALDQIGIDQHMIELDGTENKGKLGANAILGVSMAVARAAANALDLPLYVYLGGFNAKQLPVPMMNIINGGEHADNNVDIQEFMIMPVGAESFKEALRTGTEIFHSLKKVLKSKGYNTAVGDEGGFAPNLSSNEEALQTIIEAIEQAGYTPGEQVKLAMDVASSELYNKEDGKYHLSGEGKVLSSEEMVAFYEELVAKYPIISIEDGLDENDWEGHKMLTDRLGDKVQLVGDDLFVTNTKKLAQGIEQGVGNSILIKVNQIGTLTETFDAIEMAKRAGYTAVISHRSGETEDSTIADIAVATNAGQIKTGAPSRTDRVAKYNQLLRIEDELGNLAQYNGLQSFYNLKK</sequence>
<feature type="chain" id="PRO_0000133838" description="Enolase">
    <location>
        <begin position="1"/>
        <end position="429"/>
    </location>
</feature>
<feature type="active site" description="Proton donor" evidence="1">
    <location>
        <position position="204"/>
    </location>
</feature>
<feature type="active site" description="Proton acceptor" evidence="1">
    <location>
        <position position="338"/>
    </location>
</feature>
<feature type="binding site" evidence="1">
    <location>
        <position position="162"/>
    </location>
    <ligand>
        <name>(2R)-2-phosphoglycerate</name>
        <dbReference type="ChEBI" id="CHEBI:58289"/>
    </ligand>
</feature>
<feature type="binding site" evidence="1">
    <location>
        <position position="241"/>
    </location>
    <ligand>
        <name>Mg(2+)</name>
        <dbReference type="ChEBI" id="CHEBI:18420"/>
    </ligand>
</feature>
<feature type="binding site" evidence="1">
    <location>
        <position position="286"/>
    </location>
    <ligand>
        <name>Mg(2+)</name>
        <dbReference type="ChEBI" id="CHEBI:18420"/>
    </ligand>
</feature>
<feature type="binding site" evidence="1">
    <location>
        <position position="313"/>
    </location>
    <ligand>
        <name>Mg(2+)</name>
        <dbReference type="ChEBI" id="CHEBI:18420"/>
    </ligand>
</feature>
<feature type="binding site" evidence="1">
    <location>
        <position position="338"/>
    </location>
    <ligand>
        <name>(2R)-2-phosphoglycerate</name>
        <dbReference type="ChEBI" id="CHEBI:58289"/>
    </ligand>
</feature>
<feature type="binding site" evidence="1">
    <location>
        <position position="367"/>
    </location>
    <ligand>
        <name>(2R)-2-phosphoglycerate</name>
        <dbReference type="ChEBI" id="CHEBI:58289"/>
    </ligand>
</feature>
<feature type="binding site" evidence="1">
    <location>
        <position position="368"/>
    </location>
    <ligand>
        <name>(2R)-2-phosphoglycerate</name>
        <dbReference type="ChEBI" id="CHEBI:58289"/>
    </ligand>
</feature>
<feature type="binding site" evidence="1">
    <location>
        <position position="389"/>
    </location>
    <ligand>
        <name>(2R)-2-phosphoglycerate</name>
        <dbReference type="ChEBI" id="CHEBI:58289"/>
    </ligand>
</feature>
<keyword id="KW-0963">Cytoplasm</keyword>
<keyword id="KW-0324">Glycolysis</keyword>
<keyword id="KW-0456">Lyase</keyword>
<keyword id="KW-0460">Magnesium</keyword>
<keyword id="KW-0479">Metal-binding</keyword>
<keyword id="KW-1185">Reference proteome</keyword>
<keyword id="KW-0964">Secreted</keyword>
<reference key="1">
    <citation type="journal article" date="2000" name="Nucleic Acids Res.">
        <title>Complete genome sequence of the alkaliphilic bacterium Bacillus halodurans and genomic sequence comparison with Bacillus subtilis.</title>
        <authorList>
            <person name="Takami H."/>
            <person name="Nakasone K."/>
            <person name="Takaki Y."/>
            <person name="Maeno G."/>
            <person name="Sasaki R."/>
            <person name="Masui N."/>
            <person name="Fuji F."/>
            <person name="Hirama C."/>
            <person name="Nakamura Y."/>
            <person name="Ogasawara N."/>
            <person name="Kuhara S."/>
            <person name="Horikoshi K."/>
        </authorList>
    </citation>
    <scope>NUCLEOTIDE SEQUENCE [LARGE SCALE GENOMIC DNA]</scope>
    <source>
        <strain>ATCC BAA-125 / DSM 18197 / FERM 7344 / JCM 9153 / C-125</strain>
    </source>
</reference>
<comment type="function">
    <text evidence="1">Catalyzes the reversible conversion of 2-phosphoglycerate (2-PG) into phosphoenolpyruvate (PEP). It is essential for the degradation of carbohydrates via glycolysis.</text>
</comment>
<comment type="catalytic activity">
    <reaction evidence="1">
        <text>(2R)-2-phosphoglycerate = phosphoenolpyruvate + H2O</text>
        <dbReference type="Rhea" id="RHEA:10164"/>
        <dbReference type="ChEBI" id="CHEBI:15377"/>
        <dbReference type="ChEBI" id="CHEBI:58289"/>
        <dbReference type="ChEBI" id="CHEBI:58702"/>
        <dbReference type="EC" id="4.2.1.11"/>
    </reaction>
</comment>
<comment type="cofactor">
    <cofactor evidence="1">
        <name>Mg(2+)</name>
        <dbReference type="ChEBI" id="CHEBI:18420"/>
    </cofactor>
    <text evidence="1">Binds a second Mg(2+) ion via substrate during catalysis.</text>
</comment>
<comment type="pathway">
    <text evidence="1">Carbohydrate degradation; glycolysis; pyruvate from D-glyceraldehyde 3-phosphate: step 4/5.</text>
</comment>
<comment type="subcellular location">
    <subcellularLocation>
        <location evidence="1">Cytoplasm</location>
    </subcellularLocation>
    <subcellularLocation>
        <location evidence="1">Secreted</location>
    </subcellularLocation>
    <subcellularLocation>
        <location evidence="1">Cell surface</location>
    </subcellularLocation>
    <text evidence="1">Fractions of enolase are present in both the cytoplasm and on the cell surface.</text>
</comment>
<comment type="similarity">
    <text evidence="1">Belongs to the enolase family.</text>
</comment>
<protein>
    <recommendedName>
        <fullName evidence="1">Enolase</fullName>
        <ecNumber evidence="1">4.2.1.11</ecNumber>
    </recommendedName>
    <alternativeName>
        <fullName evidence="1">2-phospho-D-glycerate hydro-lyase</fullName>
    </alternativeName>
    <alternativeName>
        <fullName evidence="1">2-phosphoglycerate dehydratase</fullName>
    </alternativeName>
</protein>
<proteinExistence type="inferred from homology"/>
<dbReference type="EC" id="4.2.1.11" evidence="1"/>
<dbReference type="EMBL" id="BA000004">
    <property type="protein sequence ID" value="BAB07275.1"/>
    <property type="molecule type" value="Genomic_DNA"/>
</dbReference>
<dbReference type="PIR" id="D84094">
    <property type="entry name" value="D84094"/>
</dbReference>
<dbReference type="RefSeq" id="WP_010899685.1">
    <property type="nucleotide sequence ID" value="NC_002570.2"/>
</dbReference>
<dbReference type="SMR" id="Q9K717"/>
<dbReference type="STRING" id="272558.gene:10729469"/>
<dbReference type="KEGG" id="bha:BH3556"/>
<dbReference type="eggNOG" id="COG0148">
    <property type="taxonomic scope" value="Bacteria"/>
</dbReference>
<dbReference type="HOGENOM" id="CLU_031223_2_1_9"/>
<dbReference type="OrthoDB" id="9804716at2"/>
<dbReference type="UniPathway" id="UPA00109">
    <property type="reaction ID" value="UER00187"/>
</dbReference>
<dbReference type="Proteomes" id="UP000001258">
    <property type="component" value="Chromosome"/>
</dbReference>
<dbReference type="GO" id="GO:0009986">
    <property type="term" value="C:cell surface"/>
    <property type="evidence" value="ECO:0007669"/>
    <property type="project" value="UniProtKB-SubCell"/>
</dbReference>
<dbReference type="GO" id="GO:0005576">
    <property type="term" value="C:extracellular region"/>
    <property type="evidence" value="ECO:0007669"/>
    <property type="project" value="UniProtKB-SubCell"/>
</dbReference>
<dbReference type="GO" id="GO:0000015">
    <property type="term" value="C:phosphopyruvate hydratase complex"/>
    <property type="evidence" value="ECO:0007669"/>
    <property type="project" value="InterPro"/>
</dbReference>
<dbReference type="GO" id="GO:0000287">
    <property type="term" value="F:magnesium ion binding"/>
    <property type="evidence" value="ECO:0007669"/>
    <property type="project" value="UniProtKB-UniRule"/>
</dbReference>
<dbReference type="GO" id="GO:0004634">
    <property type="term" value="F:phosphopyruvate hydratase activity"/>
    <property type="evidence" value="ECO:0007669"/>
    <property type="project" value="UniProtKB-UniRule"/>
</dbReference>
<dbReference type="GO" id="GO:0006096">
    <property type="term" value="P:glycolytic process"/>
    <property type="evidence" value="ECO:0007669"/>
    <property type="project" value="UniProtKB-UniRule"/>
</dbReference>
<dbReference type="CDD" id="cd03313">
    <property type="entry name" value="enolase"/>
    <property type="match status" value="1"/>
</dbReference>
<dbReference type="FunFam" id="3.20.20.120:FF:000001">
    <property type="entry name" value="Enolase"/>
    <property type="match status" value="1"/>
</dbReference>
<dbReference type="FunFam" id="3.30.390.10:FF:000001">
    <property type="entry name" value="Enolase"/>
    <property type="match status" value="1"/>
</dbReference>
<dbReference type="Gene3D" id="3.20.20.120">
    <property type="entry name" value="Enolase-like C-terminal domain"/>
    <property type="match status" value="1"/>
</dbReference>
<dbReference type="Gene3D" id="3.30.390.10">
    <property type="entry name" value="Enolase-like, N-terminal domain"/>
    <property type="match status" value="1"/>
</dbReference>
<dbReference type="HAMAP" id="MF_00318">
    <property type="entry name" value="Enolase"/>
    <property type="match status" value="1"/>
</dbReference>
<dbReference type="InterPro" id="IPR000941">
    <property type="entry name" value="Enolase"/>
</dbReference>
<dbReference type="InterPro" id="IPR036849">
    <property type="entry name" value="Enolase-like_C_sf"/>
</dbReference>
<dbReference type="InterPro" id="IPR029017">
    <property type="entry name" value="Enolase-like_N"/>
</dbReference>
<dbReference type="InterPro" id="IPR020810">
    <property type="entry name" value="Enolase_C"/>
</dbReference>
<dbReference type="InterPro" id="IPR020809">
    <property type="entry name" value="Enolase_CS"/>
</dbReference>
<dbReference type="InterPro" id="IPR020811">
    <property type="entry name" value="Enolase_N"/>
</dbReference>
<dbReference type="NCBIfam" id="TIGR01060">
    <property type="entry name" value="eno"/>
    <property type="match status" value="1"/>
</dbReference>
<dbReference type="PANTHER" id="PTHR11902">
    <property type="entry name" value="ENOLASE"/>
    <property type="match status" value="1"/>
</dbReference>
<dbReference type="PANTHER" id="PTHR11902:SF1">
    <property type="entry name" value="ENOLASE"/>
    <property type="match status" value="1"/>
</dbReference>
<dbReference type="Pfam" id="PF00113">
    <property type="entry name" value="Enolase_C"/>
    <property type="match status" value="1"/>
</dbReference>
<dbReference type="Pfam" id="PF03952">
    <property type="entry name" value="Enolase_N"/>
    <property type="match status" value="1"/>
</dbReference>
<dbReference type="PIRSF" id="PIRSF001400">
    <property type="entry name" value="Enolase"/>
    <property type="match status" value="1"/>
</dbReference>
<dbReference type="PRINTS" id="PR00148">
    <property type="entry name" value="ENOLASE"/>
</dbReference>
<dbReference type="SFLD" id="SFLDF00002">
    <property type="entry name" value="enolase"/>
    <property type="match status" value="1"/>
</dbReference>
<dbReference type="SFLD" id="SFLDG00178">
    <property type="entry name" value="enolase"/>
    <property type="match status" value="1"/>
</dbReference>
<dbReference type="SMART" id="SM01192">
    <property type="entry name" value="Enolase_C"/>
    <property type="match status" value="1"/>
</dbReference>
<dbReference type="SMART" id="SM01193">
    <property type="entry name" value="Enolase_N"/>
    <property type="match status" value="1"/>
</dbReference>
<dbReference type="SUPFAM" id="SSF51604">
    <property type="entry name" value="Enolase C-terminal domain-like"/>
    <property type="match status" value="1"/>
</dbReference>
<dbReference type="SUPFAM" id="SSF54826">
    <property type="entry name" value="Enolase N-terminal domain-like"/>
    <property type="match status" value="1"/>
</dbReference>
<dbReference type="PROSITE" id="PS00164">
    <property type="entry name" value="ENOLASE"/>
    <property type="match status" value="1"/>
</dbReference>
<evidence type="ECO:0000255" key="1">
    <source>
        <dbReference type="HAMAP-Rule" id="MF_00318"/>
    </source>
</evidence>